<feature type="chain" id="PRO_0000357138" description="Methylthioribose-1-phosphate isomerase">
    <location>
        <begin position="1"/>
        <end position="337"/>
    </location>
</feature>
<feature type="active site" description="Proton donor" evidence="1">
    <location>
        <position position="228"/>
    </location>
</feature>
<feature type="binding site" evidence="1">
    <location>
        <begin position="51"/>
        <end position="53"/>
    </location>
    <ligand>
        <name>substrate</name>
    </ligand>
</feature>
<feature type="binding site" evidence="1">
    <location>
        <position position="88"/>
    </location>
    <ligand>
        <name>substrate</name>
    </ligand>
</feature>
<feature type="binding site" evidence="1">
    <location>
        <position position="187"/>
    </location>
    <ligand>
        <name>substrate</name>
    </ligand>
</feature>
<feature type="binding site" evidence="1">
    <location>
        <begin position="238"/>
        <end position="239"/>
    </location>
    <ligand>
        <name>substrate</name>
    </ligand>
</feature>
<feature type="site" description="Transition state stabilizer" evidence="1">
    <location>
        <position position="148"/>
    </location>
</feature>
<reference key="1">
    <citation type="journal article" date="2015" name="Genome Announc.">
        <title>Complete genome sequence of Anaeromyxobacter sp. Fw109-5, an anaerobic, metal-reducing bacterium isolated from a contaminated subsurface environment.</title>
        <authorList>
            <person name="Hwang C."/>
            <person name="Copeland A."/>
            <person name="Lucas S."/>
            <person name="Lapidus A."/>
            <person name="Barry K."/>
            <person name="Glavina Del Rio T."/>
            <person name="Dalin E."/>
            <person name="Tice H."/>
            <person name="Pitluck S."/>
            <person name="Sims D."/>
            <person name="Brettin T."/>
            <person name="Bruce D.C."/>
            <person name="Detter J.C."/>
            <person name="Han C.S."/>
            <person name="Schmutz J."/>
            <person name="Larimer F.W."/>
            <person name="Land M.L."/>
            <person name="Hauser L.J."/>
            <person name="Kyrpides N."/>
            <person name="Lykidis A."/>
            <person name="Richardson P."/>
            <person name="Belieav A."/>
            <person name="Sanford R.A."/>
            <person name="Loeffler F.E."/>
            <person name="Fields M.W."/>
        </authorList>
    </citation>
    <scope>NUCLEOTIDE SEQUENCE [LARGE SCALE GENOMIC DNA]</scope>
    <source>
        <strain>Fw109-5</strain>
    </source>
</reference>
<keyword id="KW-0028">Amino-acid biosynthesis</keyword>
<keyword id="KW-0413">Isomerase</keyword>
<keyword id="KW-0486">Methionine biosynthesis</keyword>
<keyword id="KW-1185">Reference proteome</keyword>
<evidence type="ECO:0000255" key="1">
    <source>
        <dbReference type="HAMAP-Rule" id="MF_01678"/>
    </source>
</evidence>
<evidence type="ECO:0000305" key="2"/>
<proteinExistence type="inferred from homology"/>
<gene>
    <name evidence="1" type="primary">mtnA</name>
    <name type="ordered locus">Anae109_4334</name>
</gene>
<dbReference type="EC" id="5.3.1.23" evidence="1"/>
<dbReference type="EMBL" id="CP000769">
    <property type="protein sequence ID" value="ABS28512.1"/>
    <property type="molecule type" value="Genomic_DNA"/>
</dbReference>
<dbReference type="RefSeq" id="WP_012099157.1">
    <property type="nucleotide sequence ID" value="NC_009675.1"/>
</dbReference>
<dbReference type="SMR" id="A7HIG6"/>
<dbReference type="STRING" id="404589.Anae109_4334"/>
<dbReference type="KEGG" id="afw:Anae109_4334"/>
<dbReference type="eggNOG" id="COG0182">
    <property type="taxonomic scope" value="Bacteria"/>
</dbReference>
<dbReference type="HOGENOM" id="CLU_016218_1_2_7"/>
<dbReference type="OrthoDB" id="9803436at2"/>
<dbReference type="UniPathway" id="UPA00904">
    <property type="reaction ID" value="UER00874"/>
</dbReference>
<dbReference type="Proteomes" id="UP000006382">
    <property type="component" value="Chromosome"/>
</dbReference>
<dbReference type="GO" id="GO:0046523">
    <property type="term" value="F:S-methyl-5-thioribose-1-phosphate isomerase activity"/>
    <property type="evidence" value="ECO:0007669"/>
    <property type="project" value="UniProtKB-UniRule"/>
</dbReference>
<dbReference type="GO" id="GO:0019509">
    <property type="term" value="P:L-methionine salvage from methylthioadenosine"/>
    <property type="evidence" value="ECO:0007669"/>
    <property type="project" value="UniProtKB-UniRule"/>
</dbReference>
<dbReference type="FunFam" id="1.20.120.420:FF:000003">
    <property type="entry name" value="Methylthioribose-1-phosphate isomerase"/>
    <property type="match status" value="1"/>
</dbReference>
<dbReference type="FunFam" id="3.40.50.10470:FF:000006">
    <property type="entry name" value="Methylthioribose-1-phosphate isomerase"/>
    <property type="match status" value="1"/>
</dbReference>
<dbReference type="Gene3D" id="1.20.120.420">
    <property type="entry name" value="translation initiation factor eif-2b, domain 1"/>
    <property type="match status" value="1"/>
</dbReference>
<dbReference type="Gene3D" id="3.40.50.10470">
    <property type="entry name" value="Translation initiation factor eif-2b, domain 2"/>
    <property type="match status" value="1"/>
</dbReference>
<dbReference type="HAMAP" id="MF_01678">
    <property type="entry name" value="Salvage_MtnA"/>
    <property type="match status" value="1"/>
</dbReference>
<dbReference type="InterPro" id="IPR000649">
    <property type="entry name" value="IF-2B-related"/>
</dbReference>
<dbReference type="InterPro" id="IPR005251">
    <property type="entry name" value="IF-M1Pi"/>
</dbReference>
<dbReference type="InterPro" id="IPR042529">
    <property type="entry name" value="IF_2B-like_C"/>
</dbReference>
<dbReference type="InterPro" id="IPR011559">
    <property type="entry name" value="Initiation_fac_2B_a/b/d"/>
</dbReference>
<dbReference type="InterPro" id="IPR027363">
    <property type="entry name" value="M1Pi_N"/>
</dbReference>
<dbReference type="InterPro" id="IPR037171">
    <property type="entry name" value="NagB/RpiA_transferase-like"/>
</dbReference>
<dbReference type="NCBIfam" id="TIGR00524">
    <property type="entry name" value="eIF-2B_rel"/>
    <property type="match status" value="1"/>
</dbReference>
<dbReference type="NCBIfam" id="NF004326">
    <property type="entry name" value="PRK05720.1"/>
    <property type="match status" value="1"/>
</dbReference>
<dbReference type="NCBIfam" id="TIGR00512">
    <property type="entry name" value="salvage_mtnA"/>
    <property type="match status" value="1"/>
</dbReference>
<dbReference type="PANTHER" id="PTHR43475">
    <property type="entry name" value="METHYLTHIORIBOSE-1-PHOSPHATE ISOMERASE"/>
    <property type="match status" value="1"/>
</dbReference>
<dbReference type="PANTHER" id="PTHR43475:SF1">
    <property type="entry name" value="METHYLTHIORIBOSE-1-PHOSPHATE ISOMERASE"/>
    <property type="match status" value="1"/>
</dbReference>
<dbReference type="Pfam" id="PF01008">
    <property type="entry name" value="IF-2B"/>
    <property type="match status" value="1"/>
</dbReference>
<dbReference type="SUPFAM" id="SSF100950">
    <property type="entry name" value="NagB/RpiA/CoA transferase-like"/>
    <property type="match status" value="1"/>
</dbReference>
<name>MTNA_ANADF</name>
<sequence length="337" mass="35693">MNPQPLRPVIYDEGRDVVRVLDQRRLPSEEVWLDLASCDEVVQAIKDLTVRGAPAIGVAAAYGLALESRRGAEPARLREASERLVHARPTAVNLAWAVRRMSRRLGLGPAALLEEAHAIRDEDEAACRRIGALGAALLPPRASVLTHCNAGALATAGYGTALGVVRAAVEGGNPVTVFADETRPFLQGARLTAWELKRDGIPVTLLTDNMAGWLMAQGEIACVVVGADRIAANGDVANKIGTYALAVLAAYHHLPFYVAAPWSTVDLATPDGSAIPIEERGDEEVVTLAGQRIAPAGVPARYPAFDVTPEPLVTAIITERGVVRRPFAPGLAALAAR</sequence>
<comment type="function">
    <text evidence="1">Catalyzes the interconversion of methylthioribose-1-phosphate (MTR-1-P) into methylthioribulose-1-phosphate (MTRu-1-P).</text>
</comment>
<comment type="catalytic activity">
    <reaction evidence="1">
        <text>5-(methylsulfanyl)-alpha-D-ribose 1-phosphate = 5-(methylsulfanyl)-D-ribulose 1-phosphate</text>
        <dbReference type="Rhea" id="RHEA:19989"/>
        <dbReference type="ChEBI" id="CHEBI:58533"/>
        <dbReference type="ChEBI" id="CHEBI:58548"/>
        <dbReference type="EC" id="5.3.1.23"/>
    </reaction>
</comment>
<comment type="pathway">
    <text evidence="1">Amino-acid biosynthesis; L-methionine biosynthesis via salvage pathway; L-methionine from S-methyl-5-thio-alpha-D-ribose 1-phosphate: step 1/6.</text>
</comment>
<comment type="similarity">
    <text evidence="2">Belongs to the eIF-2B alpha/beta/delta subunits family. MtnA subfamily.</text>
</comment>
<protein>
    <recommendedName>
        <fullName evidence="1">Methylthioribose-1-phosphate isomerase</fullName>
        <shortName evidence="1">M1Pi</shortName>
        <shortName evidence="1">MTR-1-P isomerase</shortName>
        <ecNumber evidence="1">5.3.1.23</ecNumber>
    </recommendedName>
    <alternativeName>
        <fullName evidence="1">S-methyl-5-thioribose-1-phosphate isomerase</fullName>
    </alternativeName>
</protein>
<organism>
    <name type="scientific">Anaeromyxobacter sp. (strain Fw109-5)</name>
    <dbReference type="NCBI Taxonomy" id="404589"/>
    <lineage>
        <taxon>Bacteria</taxon>
        <taxon>Pseudomonadati</taxon>
        <taxon>Myxococcota</taxon>
        <taxon>Myxococcia</taxon>
        <taxon>Myxococcales</taxon>
        <taxon>Cystobacterineae</taxon>
        <taxon>Anaeromyxobacteraceae</taxon>
        <taxon>Anaeromyxobacter</taxon>
    </lineage>
</organism>
<accession>A7HIG6</accession>